<comment type="function">
    <text evidence="1">Forms part of the ribosomal stalk which helps the ribosome interact with GTP-bound translation factors.</text>
</comment>
<comment type="subunit">
    <text evidence="1">Part of the ribosomal stalk of the 50S ribosomal subunit. Interacts with L10 and the large rRNA to form the base of the stalk. L10 forms an elongated spine to which L12 dimers bind in a sequential fashion forming a multimeric L10(L12)X complex.</text>
</comment>
<comment type="similarity">
    <text evidence="1">Belongs to the universal ribosomal protein uL11 family.</text>
</comment>
<reference key="1">
    <citation type="submission" date="2007-06" db="EMBL/GenBank/DDBJ databases">
        <title>Complete sequence of Methanococcus vannielii SB.</title>
        <authorList>
            <consortium name="US DOE Joint Genome Institute"/>
            <person name="Copeland A."/>
            <person name="Lucas S."/>
            <person name="Lapidus A."/>
            <person name="Barry K."/>
            <person name="Glavina del Rio T."/>
            <person name="Dalin E."/>
            <person name="Tice H."/>
            <person name="Pitluck S."/>
            <person name="Chain P."/>
            <person name="Malfatti S."/>
            <person name="Shin M."/>
            <person name="Vergez L."/>
            <person name="Schmutz J."/>
            <person name="Larimer F."/>
            <person name="Land M."/>
            <person name="Hauser L."/>
            <person name="Kyrpides N."/>
            <person name="Anderson I."/>
            <person name="Sieprawska-Lupa M."/>
            <person name="Whitman W.B."/>
            <person name="Richardson P."/>
        </authorList>
    </citation>
    <scope>NUCLEOTIDE SEQUENCE [LARGE SCALE GENOMIC DNA]</scope>
    <source>
        <strain>ATCC 35089 / DSM 1224 / JCM 13029 / OCM 148 / SB</strain>
    </source>
</reference>
<proteinExistence type="inferred from homology"/>
<keyword id="KW-0687">Ribonucleoprotein</keyword>
<keyword id="KW-0689">Ribosomal protein</keyword>
<keyword id="KW-0694">RNA-binding</keyword>
<keyword id="KW-0699">rRNA-binding</keyword>
<dbReference type="EMBL" id="CP000742">
    <property type="protein sequence ID" value="ABR54650.1"/>
    <property type="molecule type" value="Genomic_DNA"/>
</dbReference>
<dbReference type="RefSeq" id="WP_011972552.1">
    <property type="nucleotide sequence ID" value="NC_009634.1"/>
</dbReference>
<dbReference type="SMR" id="A6UQ78"/>
<dbReference type="STRING" id="406327.Mevan_0744"/>
<dbReference type="GeneID" id="5325477"/>
<dbReference type="KEGG" id="mvn:Mevan_0744"/>
<dbReference type="eggNOG" id="arCOG04372">
    <property type="taxonomic scope" value="Archaea"/>
</dbReference>
<dbReference type="HOGENOM" id="CLU_074237_4_0_2"/>
<dbReference type="OrthoDB" id="8842at2157"/>
<dbReference type="Proteomes" id="UP000001107">
    <property type="component" value="Chromosome"/>
</dbReference>
<dbReference type="GO" id="GO:0015934">
    <property type="term" value="C:large ribosomal subunit"/>
    <property type="evidence" value="ECO:0007669"/>
    <property type="project" value="TreeGrafter"/>
</dbReference>
<dbReference type="GO" id="GO:0070180">
    <property type="term" value="F:large ribosomal subunit rRNA binding"/>
    <property type="evidence" value="ECO:0007669"/>
    <property type="project" value="UniProtKB-UniRule"/>
</dbReference>
<dbReference type="GO" id="GO:0003735">
    <property type="term" value="F:structural constituent of ribosome"/>
    <property type="evidence" value="ECO:0007669"/>
    <property type="project" value="InterPro"/>
</dbReference>
<dbReference type="GO" id="GO:0006412">
    <property type="term" value="P:translation"/>
    <property type="evidence" value="ECO:0007669"/>
    <property type="project" value="UniProtKB-UniRule"/>
</dbReference>
<dbReference type="CDD" id="cd00349">
    <property type="entry name" value="Ribosomal_L11"/>
    <property type="match status" value="1"/>
</dbReference>
<dbReference type="FunFam" id="1.10.10.250:FF:000006">
    <property type="entry name" value="50S ribosomal protein L11"/>
    <property type="match status" value="1"/>
</dbReference>
<dbReference type="FunFam" id="3.30.1550.10:FF:000007">
    <property type="entry name" value="50S ribosomal protein L11"/>
    <property type="match status" value="1"/>
</dbReference>
<dbReference type="Gene3D" id="1.10.10.250">
    <property type="entry name" value="Ribosomal protein L11, C-terminal domain"/>
    <property type="match status" value="1"/>
</dbReference>
<dbReference type="Gene3D" id="3.30.1550.10">
    <property type="entry name" value="Ribosomal protein L11/L12, N-terminal domain"/>
    <property type="match status" value="1"/>
</dbReference>
<dbReference type="HAMAP" id="MF_00736">
    <property type="entry name" value="Ribosomal_uL11"/>
    <property type="match status" value="1"/>
</dbReference>
<dbReference type="InterPro" id="IPR000911">
    <property type="entry name" value="Ribosomal_uL11"/>
</dbReference>
<dbReference type="InterPro" id="IPR020783">
    <property type="entry name" value="Ribosomal_uL11_C"/>
</dbReference>
<dbReference type="InterPro" id="IPR036769">
    <property type="entry name" value="Ribosomal_uL11_C_sf"/>
</dbReference>
<dbReference type="InterPro" id="IPR020785">
    <property type="entry name" value="Ribosomal_uL11_CS"/>
</dbReference>
<dbReference type="InterPro" id="IPR020784">
    <property type="entry name" value="Ribosomal_uL11_N"/>
</dbReference>
<dbReference type="InterPro" id="IPR036796">
    <property type="entry name" value="Ribosomal_uL11_N_sf"/>
</dbReference>
<dbReference type="NCBIfam" id="NF002232">
    <property type="entry name" value="PRK01143.1"/>
    <property type="match status" value="1"/>
</dbReference>
<dbReference type="PANTHER" id="PTHR11661">
    <property type="entry name" value="60S RIBOSOMAL PROTEIN L12"/>
    <property type="match status" value="1"/>
</dbReference>
<dbReference type="PANTHER" id="PTHR11661:SF1">
    <property type="entry name" value="LARGE RIBOSOMAL SUBUNIT PROTEIN UL11M"/>
    <property type="match status" value="1"/>
</dbReference>
<dbReference type="Pfam" id="PF00298">
    <property type="entry name" value="Ribosomal_L11"/>
    <property type="match status" value="1"/>
</dbReference>
<dbReference type="Pfam" id="PF03946">
    <property type="entry name" value="Ribosomal_L11_N"/>
    <property type="match status" value="1"/>
</dbReference>
<dbReference type="SMART" id="SM00649">
    <property type="entry name" value="RL11"/>
    <property type="match status" value="1"/>
</dbReference>
<dbReference type="SUPFAM" id="SSF54747">
    <property type="entry name" value="Ribosomal L11/L12e N-terminal domain"/>
    <property type="match status" value="1"/>
</dbReference>
<dbReference type="SUPFAM" id="SSF46906">
    <property type="entry name" value="Ribosomal protein L11, C-terminal domain"/>
    <property type="match status" value="1"/>
</dbReference>
<dbReference type="PROSITE" id="PS00359">
    <property type="entry name" value="RIBOSOMAL_L11"/>
    <property type="match status" value="1"/>
</dbReference>
<sequence>MAEQVVEILVTGGKATAGPPLGPAIGPLGVNIMQVVQMINTKTKDYEGMSVPVKVIVETTKRTFEVEVGIPPASALIKKELGLESGSQEPKHKVAGNITMEKIVKIAKMKQDAMLAYTLKSAAKEVIGTCVSVGVNVEGKTPKEAQKAVDAGEFDSYFN</sequence>
<gene>
    <name evidence="1" type="primary">rpl11</name>
    <name type="ordered locus">Mevan_0744</name>
</gene>
<feature type="chain" id="PRO_1000046217" description="Large ribosomal subunit protein uL11">
    <location>
        <begin position="1"/>
        <end position="159"/>
    </location>
</feature>
<protein>
    <recommendedName>
        <fullName evidence="1">Large ribosomal subunit protein uL11</fullName>
    </recommendedName>
    <alternativeName>
        <fullName evidence="2">50S ribosomal protein L11</fullName>
    </alternativeName>
</protein>
<evidence type="ECO:0000255" key="1">
    <source>
        <dbReference type="HAMAP-Rule" id="MF_00736"/>
    </source>
</evidence>
<evidence type="ECO:0000305" key="2"/>
<accession>A6UQ78</accession>
<name>RL11_METVS</name>
<organism>
    <name type="scientific">Methanococcus vannielii (strain ATCC 35089 / DSM 1224 / JCM 13029 / OCM 148 / SB)</name>
    <dbReference type="NCBI Taxonomy" id="406327"/>
    <lineage>
        <taxon>Archaea</taxon>
        <taxon>Methanobacteriati</taxon>
        <taxon>Methanobacteriota</taxon>
        <taxon>Methanomada group</taxon>
        <taxon>Methanococci</taxon>
        <taxon>Methanococcales</taxon>
        <taxon>Methanococcaceae</taxon>
        <taxon>Methanococcus</taxon>
    </lineage>
</organism>